<organism>
    <name type="scientific">Ehrlichia canis (strain Jake)</name>
    <dbReference type="NCBI Taxonomy" id="269484"/>
    <lineage>
        <taxon>Bacteria</taxon>
        <taxon>Pseudomonadati</taxon>
        <taxon>Pseudomonadota</taxon>
        <taxon>Alphaproteobacteria</taxon>
        <taxon>Rickettsiales</taxon>
        <taxon>Anaplasmataceae</taxon>
        <taxon>Ehrlichia</taxon>
    </lineage>
</organism>
<dbReference type="EC" id="6.1.1.5" evidence="1"/>
<dbReference type="EMBL" id="CP000107">
    <property type="protein sequence ID" value="AAZ68532.1"/>
    <property type="molecule type" value="Genomic_DNA"/>
</dbReference>
<dbReference type="SMR" id="Q3YRX3"/>
<dbReference type="FunCoup" id="Q3YRX3">
    <property type="interactions" value="316"/>
</dbReference>
<dbReference type="STRING" id="269484.Ecaj_0495"/>
<dbReference type="KEGG" id="ecn:Ecaj_0495"/>
<dbReference type="eggNOG" id="COG0060">
    <property type="taxonomic scope" value="Bacteria"/>
</dbReference>
<dbReference type="HOGENOM" id="CLU_001493_1_1_5"/>
<dbReference type="InParanoid" id="Q3YRX3"/>
<dbReference type="Proteomes" id="UP000000435">
    <property type="component" value="Chromosome"/>
</dbReference>
<dbReference type="GO" id="GO:0005737">
    <property type="term" value="C:cytoplasm"/>
    <property type="evidence" value="ECO:0007669"/>
    <property type="project" value="UniProtKB-SubCell"/>
</dbReference>
<dbReference type="GO" id="GO:0002161">
    <property type="term" value="F:aminoacyl-tRNA deacylase activity"/>
    <property type="evidence" value="ECO:0007669"/>
    <property type="project" value="InterPro"/>
</dbReference>
<dbReference type="GO" id="GO:0005524">
    <property type="term" value="F:ATP binding"/>
    <property type="evidence" value="ECO:0007669"/>
    <property type="project" value="UniProtKB-UniRule"/>
</dbReference>
<dbReference type="GO" id="GO:0004822">
    <property type="term" value="F:isoleucine-tRNA ligase activity"/>
    <property type="evidence" value="ECO:0007669"/>
    <property type="project" value="UniProtKB-UniRule"/>
</dbReference>
<dbReference type="GO" id="GO:0000049">
    <property type="term" value="F:tRNA binding"/>
    <property type="evidence" value="ECO:0007669"/>
    <property type="project" value="InterPro"/>
</dbReference>
<dbReference type="GO" id="GO:0008270">
    <property type="term" value="F:zinc ion binding"/>
    <property type="evidence" value="ECO:0007669"/>
    <property type="project" value="UniProtKB-UniRule"/>
</dbReference>
<dbReference type="GO" id="GO:0006428">
    <property type="term" value="P:isoleucyl-tRNA aminoacylation"/>
    <property type="evidence" value="ECO:0007669"/>
    <property type="project" value="UniProtKB-UniRule"/>
</dbReference>
<dbReference type="CDD" id="cd07961">
    <property type="entry name" value="Anticodon_Ia_Ile_ABEc"/>
    <property type="match status" value="1"/>
</dbReference>
<dbReference type="CDD" id="cd00818">
    <property type="entry name" value="IleRS_core"/>
    <property type="match status" value="1"/>
</dbReference>
<dbReference type="FunFam" id="3.40.50.620:FF:000075">
    <property type="entry name" value="Isoleucine--tRNA ligase"/>
    <property type="match status" value="1"/>
</dbReference>
<dbReference type="FunFam" id="3.40.50.620:FF:000241">
    <property type="entry name" value="Isoleucine--tRNA ligase"/>
    <property type="match status" value="1"/>
</dbReference>
<dbReference type="Gene3D" id="3.40.50.620">
    <property type="entry name" value="HUPs"/>
    <property type="match status" value="2"/>
</dbReference>
<dbReference type="Gene3D" id="1.10.730.10">
    <property type="entry name" value="Isoleucyl-tRNA Synthetase, Domain 1"/>
    <property type="match status" value="1"/>
</dbReference>
<dbReference type="HAMAP" id="MF_02003">
    <property type="entry name" value="Ile_tRNA_synth_type2"/>
    <property type="match status" value="1"/>
</dbReference>
<dbReference type="InterPro" id="IPR001412">
    <property type="entry name" value="aa-tRNA-synth_I_CS"/>
</dbReference>
<dbReference type="InterPro" id="IPR002300">
    <property type="entry name" value="aa-tRNA-synth_Ia"/>
</dbReference>
<dbReference type="InterPro" id="IPR033709">
    <property type="entry name" value="Anticodon_Ile_ABEc"/>
</dbReference>
<dbReference type="InterPro" id="IPR002301">
    <property type="entry name" value="Ile-tRNA-ligase"/>
</dbReference>
<dbReference type="InterPro" id="IPR023586">
    <property type="entry name" value="Ile-tRNA-ligase_type2"/>
</dbReference>
<dbReference type="InterPro" id="IPR013155">
    <property type="entry name" value="M/V/L/I-tRNA-synth_anticd-bd"/>
</dbReference>
<dbReference type="InterPro" id="IPR014729">
    <property type="entry name" value="Rossmann-like_a/b/a_fold"/>
</dbReference>
<dbReference type="InterPro" id="IPR009080">
    <property type="entry name" value="tRNAsynth_Ia_anticodon-bd"/>
</dbReference>
<dbReference type="InterPro" id="IPR009008">
    <property type="entry name" value="Val/Leu/Ile-tRNA-synth_edit"/>
</dbReference>
<dbReference type="NCBIfam" id="TIGR00392">
    <property type="entry name" value="ileS"/>
    <property type="match status" value="1"/>
</dbReference>
<dbReference type="PANTHER" id="PTHR42780:SF1">
    <property type="entry name" value="ISOLEUCINE--TRNA LIGASE, CYTOPLASMIC"/>
    <property type="match status" value="1"/>
</dbReference>
<dbReference type="PANTHER" id="PTHR42780">
    <property type="entry name" value="SOLEUCYL-TRNA SYNTHETASE"/>
    <property type="match status" value="1"/>
</dbReference>
<dbReference type="Pfam" id="PF08264">
    <property type="entry name" value="Anticodon_1"/>
    <property type="match status" value="1"/>
</dbReference>
<dbReference type="Pfam" id="PF19302">
    <property type="entry name" value="DUF5915"/>
    <property type="match status" value="1"/>
</dbReference>
<dbReference type="Pfam" id="PF00133">
    <property type="entry name" value="tRNA-synt_1"/>
    <property type="match status" value="1"/>
</dbReference>
<dbReference type="PRINTS" id="PR00984">
    <property type="entry name" value="TRNASYNTHILE"/>
</dbReference>
<dbReference type="SUPFAM" id="SSF47323">
    <property type="entry name" value="Anticodon-binding domain of a subclass of class I aminoacyl-tRNA synthetases"/>
    <property type="match status" value="2"/>
</dbReference>
<dbReference type="SUPFAM" id="SSF52374">
    <property type="entry name" value="Nucleotidylyl transferase"/>
    <property type="match status" value="1"/>
</dbReference>
<dbReference type="SUPFAM" id="SSF50677">
    <property type="entry name" value="ValRS/IleRS/LeuRS editing domain"/>
    <property type="match status" value="1"/>
</dbReference>
<dbReference type="PROSITE" id="PS00178">
    <property type="entry name" value="AA_TRNA_LIGASE_I"/>
    <property type="match status" value="1"/>
</dbReference>
<accession>Q3YRX3</accession>
<feature type="chain" id="PRO_0000098543" description="Isoleucine--tRNA ligase">
    <location>
        <begin position="1"/>
        <end position="1120"/>
    </location>
</feature>
<feature type="short sequence motif" description="'HIGH' region">
    <location>
        <begin position="64"/>
        <end position="74"/>
    </location>
</feature>
<feature type="short sequence motif" description="'KMSKS' region">
    <location>
        <begin position="647"/>
        <end position="651"/>
    </location>
</feature>
<feature type="binding site" evidence="1">
    <location>
        <position position="650"/>
    </location>
    <ligand>
        <name>ATP</name>
        <dbReference type="ChEBI" id="CHEBI:30616"/>
    </ligand>
</feature>
<name>SYI_EHRCJ</name>
<gene>
    <name evidence="1" type="primary">ileS</name>
    <name type="ordered locus">Ecaj_0495</name>
</gene>
<evidence type="ECO:0000255" key="1">
    <source>
        <dbReference type="HAMAP-Rule" id="MF_02003"/>
    </source>
</evidence>
<comment type="function">
    <text evidence="1">Catalyzes the attachment of isoleucine to tRNA(Ile). As IleRS can inadvertently accommodate and process structurally similar amino acids such as valine, to avoid such errors it has two additional distinct tRNA(Ile)-dependent editing activities. One activity is designated as 'pretransfer' editing and involves the hydrolysis of activated Val-AMP. The other activity is designated 'posttransfer' editing and involves deacylation of mischarged Val-tRNA(Ile).</text>
</comment>
<comment type="catalytic activity">
    <reaction evidence="1">
        <text>tRNA(Ile) + L-isoleucine + ATP = L-isoleucyl-tRNA(Ile) + AMP + diphosphate</text>
        <dbReference type="Rhea" id="RHEA:11060"/>
        <dbReference type="Rhea" id="RHEA-COMP:9666"/>
        <dbReference type="Rhea" id="RHEA-COMP:9695"/>
        <dbReference type="ChEBI" id="CHEBI:30616"/>
        <dbReference type="ChEBI" id="CHEBI:33019"/>
        <dbReference type="ChEBI" id="CHEBI:58045"/>
        <dbReference type="ChEBI" id="CHEBI:78442"/>
        <dbReference type="ChEBI" id="CHEBI:78528"/>
        <dbReference type="ChEBI" id="CHEBI:456215"/>
        <dbReference type="EC" id="6.1.1.5"/>
    </reaction>
</comment>
<comment type="cofactor">
    <cofactor evidence="1">
        <name>Zn(2+)</name>
        <dbReference type="ChEBI" id="CHEBI:29105"/>
    </cofactor>
</comment>
<comment type="subunit">
    <text evidence="1">Monomer.</text>
</comment>
<comment type="subcellular location">
    <subcellularLocation>
        <location evidence="1">Cytoplasm</location>
    </subcellularLocation>
</comment>
<comment type="domain">
    <text evidence="1">IleRS has two distinct active sites: one for aminoacylation and one for editing. The misactivated valine is translocated from the active site to the editing site, which sterically excludes the correctly activated isoleucine. The single editing site contains two valyl binding pockets, one specific for each substrate (Val-AMP or Val-tRNA(Ile)).</text>
</comment>
<comment type="similarity">
    <text evidence="1">Belongs to the class-I aminoacyl-tRNA synthetase family. IleS type 2 subfamily.</text>
</comment>
<protein>
    <recommendedName>
        <fullName evidence="1">Isoleucine--tRNA ligase</fullName>
        <ecNumber evidence="1">6.1.1.5</ecNumber>
    </recommendedName>
    <alternativeName>
        <fullName evidence="1">Isoleucyl-tRNA synthetase</fullName>
        <shortName evidence="1">IleRS</shortName>
    </alternativeName>
</protein>
<keyword id="KW-0030">Aminoacyl-tRNA synthetase</keyword>
<keyword id="KW-0067">ATP-binding</keyword>
<keyword id="KW-0963">Cytoplasm</keyword>
<keyword id="KW-0436">Ligase</keyword>
<keyword id="KW-0479">Metal-binding</keyword>
<keyword id="KW-0547">Nucleotide-binding</keyword>
<keyword id="KW-0648">Protein biosynthesis</keyword>
<keyword id="KW-0862">Zinc</keyword>
<proteinExistence type="inferred from homology"/>
<sequence length="1120" mass="131115">MCIVKYLSLIINTMTEHYSQLTGEPDFPSIEENVLKFWQENNIFKKSVDNRDENKRFIFYDGPPFANGLPHYGHLLTGFIKDTVARYKTMAGFKVERRFGWDCHGLPAEMLSEKELGISGKLAIEKFGIEKFNNHCRNSVMKFSKEWKQYVDRQARWVDFENDYKTMNSSFMESIIWSFHELWNKGLIYESIKIVPYSWACQTPLSNFETRMDNAYREKTSKTVTVAFELLESPKFITVENVKTYKILVWTTTPWTLPCNLALAISKNIKYCGAIIKHEMLIFATGYLKIFQEHCKKNNIEYQLYNQDISSVNLEDLHYKPLFKYFADVKNAFKILTADFVVEGEGTGIVHIAPGFGEDDFILCKMQDIPHIEGDTSNLLSIICPIDDGAKFTDKISDFKNMHVFDTNDQIINILKQKNLCFKIDQYLHNYPHCWRTDTPLIYRAMSSWYVEVTKIKDKMIELNKTVNWIPNHICNGQFGKWLENAKDWAISRNRFWGTPLPVWKSDNPNYPRIDVYGSIRKVFNNVKALEEDFDISSINDLHRPYIDNLVRPNPDDPTGKSMMRRVSDVFDCWFESGSMPYAQLHYPFENKEFFENYFPADFITEYIAQTRGWFYTLFILSTALFNKPPFINCICHGVVLDTQGQKLSKRLNNYADPMEIFNQYGSDAMRFLMLSHTVLYGGDLLLDKEGVMIKDVLRNVIKPIWNSYNFFTIYANIDHITAEIITELNELSNIMDRYIICECINTIHSIFNAMEELDQCSNNLGYNIKLACNNITKFFEILNNWYIRRCRSRFWSSEITQDKQDAYNTLYTVIYYMIKVSAPFLPIITEAIWQRLNFQKEESVHLSSLPNISNFILNNEDKQNIQYMKLITCICNYVLSIRSTHNIRIRQPLNKIVIYSHNCPDLLNLPAEYQNILLEEVNVKSISFKSDISDIASFQLKLNFPELGKRIPDKVKRLIFLLKNDQWKILENDKLLLGTIEAEHYVINNNEYTLALKVHNDFACTINLDQHLLGVVLLDNELSNELIMEGIARDIIRTIQHSRKDNKFNISDKIDVIIHTKDNIVKDSIKTWSQYIIQQTLSTSFAIHEEISDIQDINEYYKTTMKDKEVSVFLKKSHT</sequence>
<reference key="1">
    <citation type="journal article" date="2006" name="J. Bacteriol.">
        <title>The genome of the obligately intracellular bacterium Ehrlichia canis reveals themes of complex membrane structure and immune evasion strategies.</title>
        <authorList>
            <person name="Mavromatis K."/>
            <person name="Doyle C.K."/>
            <person name="Lykidis A."/>
            <person name="Ivanova N."/>
            <person name="Francino M.P."/>
            <person name="Chain P."/>
            <person name="Shin M."/>
            <person name="Malfatti S."/>
            <person name="Larimer F."/>
            <person name="Copeland A."/>
            <person name="Detter J.C."/>
            <person name="Land M."/>
            <person name="Richardson P.M."/>
            <person name="Yu X.J."/>
            <person name="Walker D.H."/>
            <person name="McBride J.W."/>
            <person name="Kyrpides N.C."/>
        </authorList>
    </citation>
    <scope>NUCLEOTIDE SEQUENCE [LARGE SCALE GENOMIC DNA]</scope>
    <source>
        <strain>Jake</strain>
    </source>
</reference>